<organismHost>
    <name type="scientific">Homo sapiens</name>
    <name type="common">Human</name>
    <dbReference type="NCBI Taxonomy" id="9606"/>
</organismHost>
<proteinExistence type="evidence at protein level"/>
<protein>
    <recommendedName>
        <fullName evidence="2">Cytoplasmic envelopment protein 2</fullName>
    </recommendedName>
    <alternativeName>
        <fullName evidence="2">Tegument protein BGLF2</fullName>
    </alternativeName>
</protein>
<sequence>MASAANSSREQLRKFLNKECLWVLSDASTPQMKVYTATTAVSAVYVPQIAGPPKTYMNVTLIVLKPKKKPTYVTVYINGTLATVARPEVLFTKAVQGPHSLTLMYFGVFSDAVGEAVPVEIRGNPVVTCTDLTTAHVFTTSTAVKTVEELQDITPSEIIPLGRGGAWYAEGALYMFFVNMDMLMCCPNMPTFPSLTHFINLLTRCDNGECVTCYGAGAHVNILRGWTEDDSPGTSGTCPCLLPCTALNNDYVPITGHRALLGLMFKPEDAPFVVGLRFNPPKMHPDMSRVLQGVLANGKEVPCTAQPWTLLRFSDLYSRAMLYNCQVLKRQVLHSY</sequence>
<accession>P0CK55</accession>
<accession>P03221</accession>
<accession>Q777C8</accession>
<comment type="function">
    <text evidence="2">Plays a critical role in cytoplasmic virus egress. Participates in the final step of tegumentation and envelope acquisition within the host cytoplasm by directly interacting with the capsid. Upon virion binding to target cell, a signaling cascade is triggered to disrupt the interaction with the capsid, thereby preparing capsid uncoating. Activates the AP-1 pathway and enhances EBV reactivation and virus release. Inhibits type I IFN-induced TYK2, STAT1 and STAT3 phosphorylation, thereby impairing type I IFN signaling and counteracting the ability of IFN-alpha to suppress the reactivation of EBV. Recruits SHP1 phosphatase to dephosphorylate STAT1. Mediates STAT2 ubiquitination and proteasomal degradation. Also suppresses type II and type III IFN signaling. Contributes to G1/S arrest in the host cell. Acts as an miRNA regulator that interferes with the function of RISC in miRNA-mediated mRNA silencing. As a result, SUMOylation is increased. When encapsulated in the exosomes released by EBV-infected host cells, may facilitate the infection in recipient cells.</text>
</comment>
<comment type="subunit">
    <text evidence="2">Homodimer. Interacts with BBLF1. Interacts with the capsid. Interacts with BKRF4 (via C-terminus); this interaction is important for infectious virion production. Interacts with host TYK2; this interaction participates to the inhibition of host type I IFN signaling. Interacts with host STAT1; this interaction leads to STAT1 dephosphorylation and inhibition. Interacts with host STAT2; this interaction leads to STAT2 degradation. Interacts with host CUL1; this interaction might facilitate CUL1 recruitment to STAT2, leading to ubiquitination and degradation of the latter. Interacts with host AGO2; this interaction participates to the host miRNA regulation leading to enhanced SUMOylation.</text>
</comment>
<comment type="interaction">
    <interactant intactId="EBI-9644810">
        <id>P0CK55</id>
    </interactant>
    <interactant intactId="EBI-9645091">
        <id>Q3KSR6</id>
        <label>BBLF1</label>
    </interactant>
    <organismsDiffer>false</organismsDiffer>
    <experiments>2</experiments>
</comment>
<comment type="subcellular location">
    <subcellularLocation>
        <location evidence="2">Virion tegument</location>
    </subcellularLocation>
    <subcellularLocation>
        <location evidence="2">Host cytoplasm</location>
    </subcellularLocation>
    <subcellularLocation>
        <location evidence="2">Host nucleus</location>
    </subcellularLocation>
    <subcellularLocation>
        <location evidence="2">Host Golgi apparatus</location>
        <location evidence="2">Host trans-Golgi network</location>
    </subcellularLocation>
    <text evidence="2">Localizes in the host nucleus up to 18 hours postinfection, but at later times localizes to punctate, cytoplasmic structures. Associates with the capsid before the final envelopment. Recruited to the TGN via the interaction with BBLF1. Also found in the exosomes released by the host cell.</text>
</comment>
<comment type="induction">
    <text evidence="2">Expressed in the late phase of the viral replicative cycle.</text>
</comment>
<comment type="similarity">
    <text evidence="2">Belongs to the herpesviridae cytoplasmic envelopment protein 2 family.</text>
</comment>
<dbReference type="EMBL" id="AY961628">
    <property type="protein sequence ID" value="AAY41138.1"/>
    <property type="molecule type" value="Genomic_DNA"/>
</dbReference>
<dbReference type="RefSeq" id="YP_401691.1">
    <property type="nucleotide sequence ID" value="NC_007605.1"/>
</dbReference>
<dbReference type="BioGRID" id="971810">
    <property type="interactions" value="1"/>
</dbReference>
<dbReference type="IntAct" id="P0CK55">
    <property type="interactions" value="8"/>
</dbReference>
<dbReference type="MINT" id="P0CK55"/>
<dbReference type="DNASU" id="3783768"/>
<dbReference type="GeneID" id="3783768"/>
<dbReference type="KEGG" id="vg:3783768"/>
<dbReference type="Proteomes" id="UP000007641">
    <property type="component" value="Genome"/>
</dbReference>
<dbReference type="GO" id="GO:0044177">
    <property type="term" value="C:host cell Golgi apparatus"/>
    <property type="evidence" value="ECO:0007669"/>
    <property type="project" value="UniProtKB-SubCell"/>
</dbReference>
<dbReference type="GO" id="GO:0042025">
    <property type="term" value="C:host cell nucleus"/>
    <property type="evidence" value="ECO:0007669"/>
    <property type="project" value="UniProtKB-SubCell"/>
</dbReference>
<dbReference type="GO" id="GO:0019033">
    <property type="term" value="C:viral tegument"/>
    <property type="evidence" value="ECO:0007669"/>
    <property type="project" value="UniProtKB-SubCell"/>
</dbReference>
<dbReference type="GO" id="GO:0039645">
    <property type="term" value="P:symbiont-mediated perturbation of host cell cycle G1/S transition checkpoint"/>
    <property type="evidence" value="ECO:0007669"/>
    <property type="project" value="UniProtKB-KW"/>
</dbReference>
<dbReference type="GO" id="GO:0039574">
    <property type="term" value="P:symbiont-mediated suppression of host JAK-STAT cascade via inhibition of host TYK2 activity"/>
    <property type="evidence" value="ECO:0007669"/>
    <property type="project" value="UniProtKB-KW"/>
</dbReference>
<dbReference type="GO" id="GO:0039563">
    <property type="term" value="P:symbiont-mediated suppression of host JAK-STAT cascade via inhibition of STAT1 activity"/>
    <property type="evidence" value="ECO:0007669"/>
    <property type="project" value="UniProtKB-KW"/>
</dbReference>
<dbReference type="GO" id="GO:0039564">
    <property type="term" value="P:symbiont-mediated suppression of host JAK-STAT cascade via inhibition of STAT2 activity"/>
    <property type="evidence" value="ECO:0007669"/>
    <property type="project" value="UniProtKB-KW"/>
</dbReference>
<dbReference type="GO" id="GO:0039502">
    <property type="term" value="P:symbiont-mediated suppression of host type I interferon-mediated signaling pathway"/>
    <property type="evidence" value="ECO:0007669"/>
    <property type="project" value="UniProtKB-KW"/>
</dbReference>
<dbReference type="HAMAP" id="MF_04039">
    <property type="entry name" value="HSV_CEP2"/>
    <property type="match status" value="1"/>
</dbReference>
<dbReference type="InterPro" id="IPR004286">
    <property type="entry name" value="Herpes_UL16/UL94"/>
</dbReference>
<dbReference type="Pfam" id="PF03044">
    <property type="entry name" value="Herpes_UL16"/>
    <property type="match status" value="1"/>
</dbReference>
<organism>
    <name type="scientific">Epstein-Barr virus (strain GD1)</name>
    <name type="common">HHV-4</name>
    <name type="synonym">Human gammaherpesvirus 4</name>
    <dbReference type="NCBI Taxonomy" id="10376"/>
    <lineage>
        <taxon>Viruses</taxon>
        <taxon>Duplodnaviria</taxon>
        <taxon>Heunggongvirae</taxon>
        <taxon>Peploviricota</taxon>
        <taxon>Herviviricetes</taxon>
        <taxon>Herpesvirales</taxon>
        <taxon>Orthoherpesviridae</taxon>
        <taxon>Gammaherpesvirinae</taxon>
        <taxon>Lymphocryptovirus</taxon>
        <taxon>Lymphocryptovirus humangamma4</taxon>
    </lineage>
</organism>
<name>CEP2_EBVG</name>
<keyword id="KW-1078">G1/S host cell cycle checkpoint dysregulation by virus</keyword>
<keyword id="KW-1035">Host cytoplasm</keyword>
<keyword id="KW-1040">Host Golgi apparatus</keyword>
<keyword id="KW-1048">Host nucleus</keyword>
<keyword id="KW-0945">Host-virus interaction</keyword>
<keyword id="KW-1090">Inhibition of host innate immune response by virus</keyword>
<keyword id="KW-1114">Inhibition of host interferon signaling pathway by virus</keyword>
<keyword id="KW-1105">Inhibition of host STAT1 by virus</keyword>
<keyword id="KW-1106">Inhibition of host STAT2 by virus</keyword>
<keyword id="KW-1112">Inhibition of host TYK2 by virus</keyword>
<keyword id="KW-0922">Interferon antiviral system evasion</keyword>
<keyword id="KW-0426">Late protein</keyword>
<keyword id="KW-1121">Modulation of host cell cycle by virus</keyword>
<keyword id="KW-0899">Viral immunoevasion</keyword>
<keyword id="KW-0946">Virion</keyword>
<keyword id="KW-0920">Virion tegument</keyword>
<gene>
    <name type="ORF">BGLF2</name>
</gene>
<evidence type="ECO:0000250" key="1">
    <source>
        <dbReference type="UniProtKB" id="P0CK53"/>
    </source>
</evidence>
<evidence type="ECO:0000255" key="2">
    <source>
        <dbReference type="HAMAP-Rule" id="MF_04039"/>
    </source>
</evidence>
<reference key="1">
    <citation type="journal article" date="2005" name="J. Virol.">
        <title>Genomic sequence analysis of Epstein-Barr virus strain GD1 from a nasopharyngeal carcinoma patient.</title>
        <authorList>
            <person name="Zeng M.-S."/>
            <person name="Li D.-J."/>
            <person name="Liu Q.-L."/>
            <person name="Song L.-B."/>
            <person name="Li M.-Z."/>
            <person name="Zhang R.-H."/>
            <person name="Yu X.-J."/>
            <person name="Wang H.-M."/>
            <person name="Ernberg I."/>
            <person name="Zeng Y.-X."/>
        </authorList>
    </citation>
    <scope>NUCLEOTIDE SEQUENCE [LARGE SCALE GENOMIC DNA]</scope>
</reference>
<feature type="chain" id="PRO_0000415972" description="Cytoplasmic envelopment protein 2">
    <location>
        <begin position="1"/>
        <end position="336"/>
    </location>
</feature>
<feature type="region of interest" description="Interaction with host BBLF1" evidence="1">
    <location>
        <begin position="67"/>
        <end position="69"/>
    </location>
</feature>